<evidence type="ECO:0000255" key="1">
    <source>
        <dbReference type="HAMAP-Rule" id="MF_01075"/>
    </source>
</evidence>
<name>NHAP2_STUS1</name>
<reference key="1">
    <citation type="journal article" date="2008" name="Proc. Natl. Acad. Sci. U.S.A.">
        <title>Nitrogen fixation island and rhizosphere competence traits in the genome of root-associated Pseudomonas stutzeri A1501.</title>
        <authorList>
            <person name="Yan Y."/>
            <person name="Yang J."/>
            <person name="Dou Y."/>
            <person name="Chen M."/>
            <person name="Ping S."/>
            <person name="Peng J."/>
            <person name="Lu W."/>
            <person name="Zhang W."/>
            <person name="Yao Z."/>
            <person name="Li H."/>
            <person name="Liu W."/>
            <person name="He S."/>
            <person name="Geng L."/>
            <person name="Zhang X."/>
            <person name="Yang F."/>
            <person name="Yu H."/>
            <person name="Zhan Y."/>
            <person name="Li D."/>
            <person name="Lin Z."/>
            <person name="Wang Y."/>
            <person name="Elmerich C."/>
            <person name="Lin M."/>
            <person name="Jin Q."/>
        </authorList>
    </citation>
    <scope>NUCLEOTIDE SEQUENCE [LARGE SCALE GENOMIC DNA]</scope>
    <source>
        <strain>A1501</strain>
    </source>
</reference>
<proteinExistence type="inferred from homology"/>
<comment type="function">
    <text evidence="1">K(+)/H(+) antiporter that extrudes potassium in exchange for external protons and maintains the internal concentration of potassium under toxic levels.</text>
</comment>
<comment type="catalytic activity">
    <reaction evidence="1">
        <text>K(+)(in) + H(+)(out) = K(+)(out) + H(+)(in)</text>
        <dbReference type="Rhea" id="RHEA:29467"/>
        <dbReference type="ChEBI" id="CHEBI:15378"/>
        <dbReference type="ChEBI" id="CHEBI:29103"/>
    </reaction>
    <physiologicalReaction direction="left-to-right" evidence="1">
        <dbReference type="Rhea" id="RHEA:29468"/>
    </physiologicalReaction>
</comment>
<comment type="subcellular location">
    <subcellularLocation>
        <location evidence="1">Cell inner membrane</location>
        <topology evidence="1">Multi-pass membrane protein</topology>
    </subcellularLocation>
</comment>
<comment type="similarity">
    <text evidence="1">Belongs to the monovalent cation:proton antiporter 1 (CPA1) transporter (TC 2.A.36) family. NhaP2 subfamily.</text>
</comment>
<dbReference type="EMBL" id="CP000304">
    <property type="protein sequence ID" value="ABP81502.1"/>
    <property type="molecule type" value="Genomic_DNA"/>
</dbReference>
<dbReference type="RefSeq" id="WP_011914887.1">
    <property type="nucleotide sequence ID" value="NC_009434.1"/>
</dbReference>
<dbReference type="SMR" id="A4VRA1"/>
<dbReference type="KEGG" id="psa:PST_3879"/>
<dbReference type="eggNOG" id="COG3263">
    <property type="taxonomic scope" value="Bacteria"/>
</dbReference>
<dbReference type="HOGENOM" id="CLU_005912_9_2_6"/>
<dbReference type="Proteomes" id="UP000000233">
    <property type="component" value="Chromosome"/>
</dbReference>
<dbReference type="GO" id="GO:0005886">
    <property type="term" value="C:plasma membrane"/>
    <property type="evidence" value="ECO:0007669"/>
    <property type="project" value="UniProtKB-SubCell"/>
</dbReference>
<dbReference type="GO" id="GO:0050660">
    <property type="term" value="F:flavin adenine dinucleotide binding"/>
    <property type="evidence" value="ECO:0007669"/>
    <property type="project" value="InterPro"/>
</dbReference>
<dbReference type="GO" id="GO:0015386">
    <property type="term" value="F:potassium:proton antiporter activity"/>
    <property type="evidence" value="ECO:0007669"/>
    <property type="project" value="UniProtKB-UniRule"/>
</dbReference>
<dbReference type="GO" id="GO:0006884">
    <property type="term" value="P:cell volume homeostasis"/>
    <property type="evidence" value="ECO:0007669"/>
    <property type="project" value="InterPro"/>
</dbReference>
<dbReference type="Gene3D" id="1.20.1530.20">
    <property type="match status" value="1"/>
</dbReference>
<dbReference type="Gene3D" id="3.30.465.10">
    <property type="match status" value="1"/>
</dbReference>
<dbReference type="Gene3D" id="3.30.70.1450">
    <property type="entry name" value="Regulator of K+ conductance, C-terminal domain"/>
    <property type="match status" value="1"/>
</dbReference>
<dbReference type="HAMAP" id="MF_01075">
    <property type="entry name" value="NhaP2"/>
    <property type="match status" value="1"/>
</dbReference>
<dbReference type="InterPro" id="IPR006153">
    <property type="entry name" value="Cation/H_exchanger_TM"/>
</dbReference>
<dbReference type="InterPro" id="IPR036318">
    <property type="entry name" value="FAD-bd_PCMH-like_sf"/>
</dbReference>
<dbReference type="InterPro" id="IPR016169">
    <property type="entry name" value="FAD-bd_PCMH_sub2"/>
</dbReference>
<dbReference type="InterPro" id="IPR038770">
    <property type="entry name" value="Na+/solute_symporter_sf"/>
</dbReference>
<dbReference type="InterPro" id="IPR023729">
    <property type="entry name" value="NhaP2"/>
</dbReference>
<dbReference type="InterPro" id="IPR006037">
    <property type="entry name" value="RCK_C"/>
</dbReference>
<dbReference type="InterPro" id="IPR036721">
    <property type="entry name" value="RCK_C_sf"/>
</dbReference>
<dbReference type="InterPro" id="IPR005170">
    <property type="entry name" value="Transptr-assoc_dom"/>
</dbReference>
<dbReference type="NCBIfam" id="NF003714">
    <property type="entry name" value="PRK05326.1-1"/>
    <property type="match status" value="1"/>
</dbReference>
<dbReference type="NCBIfam" id="NF003715">
    <property type="entry name" value="PRK05326.1-2"/>
    <property type="match status" value="1"/>
</dbReference>
<dbReference type="NCBIfam" id="NF003716">
    <property type="entry name" value="PRK05326.1-3"/>
    <property type="match status" value="1"/>
</dbReference>
<dbReference type="PANTHER" id="PTHR32507:SF7">
    <property type="entry name" value="K(+)_H(+) ANTIPORTER NHAP2"/>
    <property type="match status" value="1"/>
</dbReference>
<dbReference type="PANTHER" id="PTHR32507">
    <property type="entry name" value="NA(+)/H(+) ANTIPORTER 1"/>
    <property type="match status" value="1"/>
</dbReference>
<dbReference type="Pfam" id="PF03471">
    <property type="entry name" value="CorC_HlyC"/>
    <property type="match status" value="1"/>
</dbReference>
<dbReference type="Pfam" id="PF00999">
    <property type="entry name" value="Na_H_Exchanger"/>
    <property type="match status" value="1"/>
</dbReference>
<dbReference type="Pfam" id="PF02080">
    <property type="entry name" value="TrkA_C"/>
    <property type="match status" value="1"/>
</dbReference>
<dbReference type="SMART" id="SM01091">
    <property type="entry name" value="CorC_HlyC"/>
    <property type="match status" value="1"/>
</dbReference>
<dbReference type="SUPFAM" id="SSF56176">
    <property type="entry name" value="FAD-binding/transporter-associated domain-like"/>
    <property type="match status" value="1"/>
</dbReference>
<dbReference type="SUPFAM" id="SSF116726">
    <property type="entry name" value="TrkA C-terminal domain-like"/>
    <property type="match status" value="1"/>
</dbReference>
<dbReference type="PROSITE" id="PS51202">
    <property type="entry name" value="RCK_C"/>
    <property type="match status" value="1"/>
</dbReference>
<gene>
    <name evidence="1" type="primary">nhaP2</name>
    <name type="synonym">cvrA</name>
    <name type="ordered locus">PST_3879</name>
</gene>
<protein>
    <recommendedName>
        <fullName evidence="1">K(+)/H(+) antiporter NhaP2</fullName>
    </recommendedName>
    <alternativeName>
        <fullName evidence="1">Potassium/proton antiporter NhaP2</fullName>
    </alternativeName>
</protein>
<accession>A4VRA1</accession>
<keyword id="KW-0050">Antiport</keyword>
<keyword id="KW-0997">Cell inner membrane</keyword>
<keyword id="KW-1003">Cell membrane</keyword>
<keyword id="KW-0406">Ion transport</keyword>
<keyword id="KW-0472">Membrane</keyword>
<keyword id="KW-0630">Potassium</keyword>
<keyword id="KW-0633">Potassium transport</keyword>
<keyword id="KW-1185">Reference proteome</keyword>
<keyword id="KW-0812">Transmembrane</keyword>
<keyword id="KW-1133">Transmembrane helix</keyword>
<keyword id="KW-0813">Transport</keyword>
<sequence length="581" mass="62141">MDVGNINHLFFIGALLVAASILMSSLSNRLGVPILVIFLAVGMLAGVDGVGGIVFEDYRLAFVISNLALAVILLDGGMRTRTATFRVALKPAFSLATLGVAITSGLTGLAAAWLFDLPLLQGLLIGAIVGSTDAAVVFNLLNGKGLNERVGSTLEIESGSNDPMAMFLTVALIEMLLAGQSTFGWDFLLSLLQQFGIGTVLGLLGGWLLLQLINRLSVADGLYPLLAVAGGLMIFALSGAIGGSGILAIYVCGLLLGNRPIRNRHGILHMFDGLAWLSQIGMFLVLGLLLTPSELLPIAIPALLLSLWMILFARPLAVFVSLLPFRSFHLRERLFISWIGLRGAVPVILAVFPLMAGLENAQLFFNVAFFIVLVSLLLQGSTLAWAAKKAKVEVPPSPMPVSRTGLQVHTTSQWEMFVYRLSASKWCVGAALRELKMPPGTRIAALFRGKELLHPSGSTRLQVDDILCVIGHDEDLPALGKLFSQAPTRGQDLRFFGDFILEGDARLSDIAALYGLKLGEVDGNQTIGAFMAEQVSGNPVVGDQVEWNGLTWTVAAMETGEVRKVGLKFPEGDKPGPQLMF</sequence>
<organism>
    <name type="scientific">Stutzerimonas stutzeri (strain A1501)</name>
    <name type="common">Pseudomonas stutzeri</name>
    <dbReference type="NCBI Taxonomy" id="379731"/>
    <lineage>
        <taxon>Bacteria</taxon>
        <taxon>Pseudomonadati</taxon>
        <taxon>Pseudomonadota</taxon>
        <taxon>Gammaproteobacteria</taxon>
        <taxon>Pseudomonadales</taxon>
        <taxon>Pseudomonadaceae</taxon>
        <taxon>Stutzerimonas</taxon>
    </lineage>
</organism>
<feature type="chain" id="PRO_1000064671" description="K(+)/H(+) antiporter NhaP2">
    <location>
        <begin position="1"/>
        <end position="581"/>
    </location>
</feature>
<feature type="transmembrane region" description="Helical" evidence="1">
    <location>
        <begin position="3"/>
        <end position="23"/>
    </location>
</feature>
<feature type="transmembrane region" description="Helical" evidence="1">
    <location>
        <begin position="34"/>
        <end position="54"/>
    </location>
</feature>
<feature type="transmembrane region" description="Helical" evidence="1">
    <location>
        <begin position="58"/>
        <end position="78"/>
    </location>
</feature>
<feature type="transmembrane region" description="Helical" evidence="1">
    <location>
        <begin position="87"/>
        <end position="107"/>
    </location>
</feature>
<feature type="transmembrane region" description="Helical" evidence="1">
    <location>
        <begin position="109"/>
        <end position="129"/>
    </location>
</feature>
<feature type="transmembrane region" description="Helical" evidence="1">
    <location>
        <begin position="165"/>
        <end position="185"/>
    </location>
</feature>
<feature type="transmembrane region" description="Helical" evidence="1">
    <location>
        <begin position="187"/>
        <end position="207"/>
    </location>
</feature>
<feature type="transmembrane region" description="Helical" evidence="1">
    <location>
        <begin position="231"/>
        <end position="251"/>
    </location>
</feature>
<feature type="transmembrane region" description="Helical" evidence="1">
    <location>
        <begin position="280"/>
        <end position="300"/>
    </location>
</feature>
<feature type="transmembrane region" description="Helical" evidence="1">
    <location>
        <begin position="303"/>
        <end position="323"/>
    </location>
</feature>
<feature type="transmembrane region" description="Helical" evidence="1">
    <location>
        <begin position="334"/>
        <end position="354"/>
    </location>
</feature>
<feature type="transmembrane region" description="Helical" evidence="1">
    <location>
        <begin position="367"/>
        <end position="387"/>
    </location>
</feature>
<feature type="domain" description="RCK C-terminal" evidence="1">
    <location>
        <begin position="403"/>
        <end position="485"/>
    </location>
</feature>